<sequence>MARSLKKGPFVDDHVMKKVIAAKKANDNKPIKTWSRRSTITPDMIGLTFNVHNGKSFIPVYITENHIGYKLGEFAPTRTFKGHKGSVQKKIGK</sequence>
<proteinExistence type="inferred from homology"/>
<reference key="1">
    <citation type="journal article" date="2000" name="Nature">
        <title>The genome sequence of the food-borne pathogen Campylobacter jejuni reveals hypervariable sequences.</title>
        <authorList>
            <person name="Parkhill J."/>
            <person name="Wren B.W."/>
            <person name="Mungall K.L."/>
            <person name="Ketley J.M."/>
            <person name="Churcher C.M."/>
            <person name="Basham D."/>
            <person name="Chillingworth T."/>
            <person name="Davies R.M."/>
            <person name="Feltwell T."/>
            <person name="Holroyd S."/>
            <person name="Jagels K."/>
            <person name="Karlyshev A.V."/>
            <person name="Moule S."/>
            <person name="Pallen M.J."/>
            <person name="Penn C.W."/>
            <person name="Quail M.A."/>
            <person name="Rajandream M.A."/>
            <person name="Rutherford K.M."/>
            <person name="van Vliet A.H.M."/>
            <person name="Whitehead S."/>
            <person name="Barrell B.G."/>
        </authorList>
    </citation>
    <scope>NUCLEOTIDE SEQUENCE [LARGE SCALE GENOMIC DNA]</scope>
    <source>
        <strain>ATCC 700819 / NCTC 11168</strain>
    </source>
</reference>
<organism>
    <name type="scientific">Campylobacter jejuni subsp. jejuni serotype O:2 (strain ATCC 700819 / NCTC 11168)</name>
    <dbReference type="NCBI Taxonomy" id="192222"/>
    <lineage>
        <taxon>Bacteria</taxon>
        <taxon>Pseudomonadati</taxon>
        <taxon>Campylobacterota</taxon>
        <taxon>Epsilonproteobacteria</taxon>
        <taxon>Campylobacterales</taxon>
        <taxon>Campylobacteraceae</taxon>
        <taxon>Campylobacter</taxon>
    </lineage>
</organism>
<keyword id="KW-1185">Reference proteome</keyword>
<keyword id="KW-0687">Ribonucleoprotein</keyword>
<keyword id="KW-0689">Ribosomal protein</keyword>
<keyword id="KW-0694">RNA-binding</keyword>
<keyword id="KW-0699">rRNA-binding</keyword>
<comment type="function">
    <text evidence="1">Protein S19 forms a complex with S13 that binds strongly to the 16S ribosomal RNA.</text>
</comment>
<comment type="similarity">
    <text evidence="1">Belongs to the universal ribosomal protein uS19 family.</text>
</comment>
<dbReference type="EMBL" id="AL111168">
    <property type="protein sequence ID" value="CAL35797.1"/>
    <property type="molecule type" value="Genomic_DNA"/>
</dbReference>
<dbReference type="PIR" id="C81268">
    <property type="entry name" value="C81268"/>
</dbReference>
<dbReference type="RefSeq" id="WP_002851509.1">
    <property type="nucleotide sequence ID" value="NZ_SZUC01000002.1"/>
</dbReference>
<dbReference type="RefSeq" id="YP_002345069.1">
    <property type="nucleotide sequence ID" value="NC_002163.1"/>
</dbReference>
<dbReference type="SMR" id="Q9PLX5"/>
<dbReference type="IntAct" id="Q9PLX5">
    <property type="interactions" value="1"/>
</dbReference>
<dbReference type="STRING" id="192222.Cj1703c"/>
<dbReference type="PaxDb" id="192222-Cj1703c"/>
<dbReference type="EnsemblBacteria" id="CAL35797">
    <property type="protein sequence ID" value="CAL35797"/>
    <property type="gene ID" value="Cj1703c"/>
</dbReference>
<dbReference type="GeneID" id="905977"/>
<dbReference type="KEGG" id="cje:Cj1703c"/>
<dbReference type="PATRIC" id="fig|192222.6.peg.1677"/>
<dbReference type="eggNOG" id="COG0185">
    <property type="taxonomic scope" value="Bacteria"/>
</dbReference>
<dbReference type="HOGENOM" id="CLU_144911_0_1_7"/>
<dbReference type="OrthoDB" id="9797833at2"/>
<dbReference type="Proteomes" id="UP000000799">
    <property type="component" value="Chromosome"/>
</dbReference>
<dbReference type="GO" id="GO:0005737">
    <property type="term" value="C:cytoplasm"/>
    <property type="evidence" value="ECO:0007669"/>
    <property type="project" value="UniProtKB-ARBA"/>
</dbReference>
<dbReference type="GO" id="GO:0015935">
    <property type="term" value="C:small ribosomal subunit"/>
    <property type="evidence" value="ECO:0007669"/>
    <property type="project" value="InterPro"/>
</dbReference>
<dbReference type="GO" id="GO:0019843">
    <property type="term" value="F:rRNA binding"/>
    <property type="evidence" value="ECO:0007669"/>
    <property type="project" value="UniProtKB-UniRule"/>
</dbReference>
<dbReference type="GO" id="GO:0003735">
    <property type="term" value="F:structural constituent of ribosome"/>
    <property type="evidence" value="ECO:0007669"/>
    <property type="project" value="InterPro"/>
</dbReference>
<dbReference type="GO" id="GO:0000028">
    <property type="term" value="P:ribosomal small subunit assembly"/>
    <property type="evidence" value="ECO:0007669"/>
    <property type="project" value="TreeGrafter"/>
</dbReference>
<dbReference type="GO" id="GO:0006412">
    <property type="term" value="P:translation"/>
    <property type="evidence" value="ECO:0007669"/>
    <property type="project" value="UniProtKB-UniRule"/>
</dbReference>
<dbReference type="FunFam" id="3.30.860.10:FF:000001">
    <property type="entry name" value="30S ribosomal protein S19"/>
    <property type="match status" value="1"/>
</dbReference>
<dbReference type="Gene3D" id="3.30.860.10">
    <property type="entry name" value="30s Ribosomal Protein S19, Chain A"/>
    <property type="match status" value="1"/>
</dbReference>
<dbReference type="HAMAP" id="MF_00531">
    <property type="entry name" value="Ribosomal_uS19"/>
    <property type="match status" value="1"/>
</dbReference>
<dbReference type="InterPro" id="IPR002222">
    <property type="entry name" value="Ribosomal_uS19"/>
</dbReference>
<dbReference type="InterPro" id="IPR005732">
    <property type="entry name" value="Ribosomal_uS19_bac-type"/>
</dbReference>
<dbReference type="InterPro" id="IPR020934">
    <property type="entry name" value="Ribosomal_uS19_CS"/>
</dbReference>
<dbReference type="InterPro" id="IPR023575">
    <property type="entry name" value="Ribosomal_uS19_SF"/>
</dbReference>
<dbReference type="NCBIfam" id="TIGR01050">
    <property type="entry name" value="rpsS_bact"/>
    <property type="match status" value="1"/>
</dbReference>
<dbReference type="PANTHER" id="PTHR11880">
    <property type="entry name" value="RIBOSOMAL PROTEIN S19P FAMILY MEMBER"/>
    <property type="match status" value="1"/>
</dbReference>
<dbReference type="PANTHER" id="PTHR11880:SF8">
    <property type="entry name" value="SMALL RIBOSOMAL SUBUNIT PROTEIN US19M"/>
    <property type="match status" value="1"/>
</dbReference>
<dbReference type="Pfam" id="PF00203">
    <property type="entry name" value="Ribosomal_S19"/>
    <property type="match status" value="1"/>
</dbReference>
<dbReference type="PIRSF" id="PIRSF002144">
    <property type="entry name" value="Ribosomal_S19"/>
    <property type="match status" value="1"/>
</dbReference>
<dbReference type="PRINTS" id="PR00975">
    <property type="entry name" value="RIBOSOMALS19"/>
</dbReference>
<dbReference type="SUPFAM" id="SSF54570">
    <property type="entry name" value="Ribosomal protein S19"/>
    <property type="match status" value="1"/>
</dbReference>
<dbReference type="PROSITE" id="PS00323">
    <property type="entry name" value="RIBOSOMAL_S19"/>
    <property type="match status" value="1"/>
</dbReference>
<accession>Q9PLX5</accession>
<accession>Q0P7S8</accession>
<evidence type="ECO:0000255" key="1">
    <source>
        <dbReference type="HAMAP-Rule" id="MF_00531"/>
    </source>
</evidence>
<evidence type="ECO:0000305" key="2"/>
<feature type="chain" id="PRO_0000129799" description="Small ribosomal subunit protein uS19">
    <location>
        <begin position="1"/>
        <end position="93"/>
    </location>
</feature>
<protein>
    <recommendedName>
        <fullName evidence="1">Small ribosomal subunit protein uS19</fullName>
    </recommendedName>
    <alternativeName>
        <fullName evidence="2">30S ribosomal protein S19</fullName>
    </alternativeName>
</protein>
<gene>
    <name evidence="1" type="primary">rpsS</name>
    <name type="ordered locus">Cj1703c</name>
</gene>
<name>RS19_CAMJE</name>